<dbReference type="EC" id="3.1.1.26" evidence="9"/>
<dbReference type="EC" id="3.1.1.3" evidence="8 9"/>
<dbReference type="EMBL" id="L09216">
    <property type="protein sequence ID" value="AAA41250.1"/>
    <property type="status" value="ALT_INIT"/>
    <property type="molecule type" value="mRNA"/>
</dbReference>
<dbReference type="PIR" id="A46696">
    <property type="entry name" value="A46696"/>
</dbReference>
<dbReference type="RefSeq" id="NP_476554.1">
    <property type="nucleotide sequence ID" value="NM_057206.1"/>
</dbReference>
<dbReference type="PDB" id="1BU8">
    <property type="method" value="X-ray"/>
    <property type="resolution" value="1.80 A"/>
    <property type="chains" value="A=17-468"/>
</dbReference>
<dbReference type="PDBsum" id="1BU8"/>
<dbReference type="SMR" id="P54318"/>
<dbReference type="FunCoup" id="P54318">
    <property type="interactions" value="37"/>
</dbReference>
<dbReference type="STRING" id="10116.ENSRNOP00000063609"/>
<dbReference type="ESTHER" id="ratno-4plip">
    <property type="family name" value="Pancreatic_lipase"/>
</dbReference>
<dbReference type="GlyCosmos" id="P54318">
    <property type="glycosylation" value="2 sites, No reported glycans"/>
</dbReference>
<dbReference type="GlyGen" id="P54318">
    <property type="glycosylation" value="2 sites"/>
</dbReference>
<dbReference type="iPTMnet" id="P54318"/>
<dbReference type="PhosphoSitePlus" id="P54318"/>
<dbReference type="PaxDb" id="10116-ENSRNOP00000063609"/>
<dbReference type="GeneID" id="117554"/>
<dbReference type="KEGG" id="rno:117554"/>
<dbReference type="AGR" id="RGD:620793"/>
<dbReference type="CTD" id="5408"/>
<dbReference type="RGD" id="620793">
    <property type="gene designation" value="Pnliprp2"/>
</dbReference>
<dbReference type="eggNOG" id="ENOG502QUK7">
    <property type="taxonomic scope" value="Eukaryota"/>
</dbReference>
<dbReference type="InParanoid" id="P54318"/>
<dbReference type="OrthoDB" id="199913at2759"/>
<dbReference type="BRENDA" id="3.1.1.26">
    <property type="organism ID" value="5301"/>
</dbReference>
<dbReference type="Reactome" id="R-RNO-192456">
    <property type="pathway name" value="Digestion of dietary lipid"/>
</dbReference>
<dbReference type="UniPathway" id="UPA00256"/>
<dbReference type="EvolutionaryTrace" id="P54318"/>
<dbReference type="PRO" id="PR:P54318"/>
<dbReference type="Proteomes" id="UP000002494">
    <property type="component" value="Unplaced"/>
</dbReference>
<dbReference type="GO" id="GO:0005615">
    <property type="term" value="C:extracellular space"/>
    <property type="evidence" value="ECO:0000314"/>
    <property type="project" value="RGD"/>
</dbReference>
<dbReference type="GO" id="GO:0043005">
    <property type="term" value="C:neuron projection"/>
    <property type="evidence" value="ECO:0000314"/>
    <property type="project" value="UniProtKB"/>
</dbReference>
<dbReference type="GO" id="GO:0042589">
    <property type="term" value="C:zymogen granule membrane"/>
    <property type="evidence" value="ECO:0000314"/>
    <property type="project" value="RGD"/>
</dbReference>
<dbReference type="GO" id="GO:0005509">
    <property type="term" value="F:calcium ion binding"/>
    <property type="evidence" value="ECO:0000250"/>
    <property type="project" value="UniProtKB"/>
</dbReference>
<dbReference type="GO" id="GO:0047714">
    <property type="term" value="F:galactolipase activity"/>
    <property type="evidence" value="ECO:0000314"/>
    <property type="project" value="RGD"/>
</dbReference>
<dbReference type="GO" id="GO:0016298">
    <property type="term" value="F:lipase activity"/>
    <property type="evidence" value="ECO:0000314"/>
    <property type="project" value="RGD"/>
</dbReference>
<dbReference type="GO" id="GO:0004465">
    <property type="term" value="F:lipoprotein lipase activity"/>
    <property type="evidence" value="ECO:0000318"/>
    <property type="project" value="GO_Central"/>
</dbReference>
<dbReference type="GO" id="GO:0047372">
    <property type="term" value="F:monoacylglycerol lipase activity"/>
    <property type="evidence" value="ECO:0000250"/>
    <property type="project" value="UniProtKB"/>
</dbReference>
<dbReference type="GO" id="GO:0008970">
    <property type="term" value="F:phospholipase A1 activity"/>
    <property type="evidence" value="ECO:0000318"/>
    <property type="project" value="GO_Central"/>
</dbReference>
<dbReference type="GO" id="GO:0004620">
    <property type="term" value="F:phospholipase activity"/>
    <property type="evidence" value="ECO:0000314"/>
    <property type="project" value="RGD"/>
</dbReference>
<dbReference type="GO" id="GO:0004806">
    <property type="term" value="F:triacylglycerol lipase activity"/>
    <property type="evidence" value="ECO:0000314"/>
    <property type="project" value="RGD"/>
</dbReference>
<dbReference type="GO" id="GO:0006968">
    <property type="term" value="P:cellular defense response"/>
    <property type="evidence" value="ECO:0000266"/>
    <property type="project" value="RGD"/>
</dbReference>
<dbReference type="GO" id="GO:0042632">
    <property type="term" value="P:cholesterol homeostasis"/>
    <property type="evidence" value="ECO:0000318"/>
    <property type="project" value="GO_Central"/>
</dbReference>
<dbReference type="GO" id="GO:0006633">
    <property type="term" value="P:fatty acid biosynthetic process"/>
    <property type="evidence" value="ECO:0000318"/>
    <property type="project" value="GO_Central"/>
</dbReference>
<dbReference type="GO" id="GO:0019376">
    <property type="term" value="P:galactolipid catabolic process"/>
    <property type="evidence" value="ECO:0000314"/>
    <property type="project" value="RGD"/>
</dbReference>
<dbReference type="GO" id="GO:0034375">
    <property type="term" value="P:high-density lipoprotein particle remodeling"/>
    <property type="evidence" value="ECO:0000318"/>
    <property type="project" value="GO_Central"/>
</dbReference>
<dbReference type="GO" id="GO:0044258">
    <property type="term" value="P:intestinal lipid catabolic process"/>
    <property type="evidence" value="ECO:0000266"/>
    <property type="project" value="RGD"/>
</dbReference>
<dbReference type="GO" id="GO:0034638">
    <property type="term" value="P:phosphatidylcholine catabolic process"/>
    <property type="evidence" value="ECO:0000250"/>
    <property type="project" value="UniProtKB"/>
</dbReference>
<dbReference type="GO" id="GO:0009395">
    <property type="term" value="P:phospholipid catabolic process"/>
    <property type="evidence" value="ECO:0000250"/>
    <property type="project" value="UniProtKB"/>
</dbReference>
<dbReference type="GO" id="GO:0006644">
    <property type="term" value="P:phospholipid metabolic process"/>
    <property type="evidence" value="ECO:0000315"/>
    <property type="project" value="UniProtKB"/>
</dbReference>
<dbReference type="GO" id="GO:0009791">
    <property type="term" value="P:post-embryonic development"/>
    <property type="evidence" value="ECO:0000270"/>
    <property type="project" value="RGD"/>
</dbReference>
<dbReference type="GO" id="GO:0009617">
    <property type="term" value="P:response to bacterium"/>
    <property type="evidence" value="ECO:0000266"/>
    <property type="project" value="RGD"/>
</dbReference>
<dbReference type="GO" id="GO:0032094">
    <property type="term" value="P:response to food"/>
    <property type="evidence" value="ECO:0000270"/>
    <property type="project" value="RGD"/>
</dbReference>
<dbReference type="GO" id="GO:0051384">
    <property type="term" value="P:response to glucocorticoid"/>
    <property type="evidence" value="ECO:0000270"/>
    <property type="project" value="RGD"/>
</dbReference>
<dbReference type="GO" id="GO:0033993">
    <property type="term" value="P:response to lipid"/>
    <property type="evidence" value="ECO:0000270"/>
    <property type="project" value="RGD"/>
</dbReference>
<dbReference type="GO" id="GO:0043434">
    <property type="term" value="P:response to peptide hormone"/>
    <property type="evidence" value="ECO:0000270"/>
    <property type="project" value="RGD"/>
</dbReference>
<dbReference type="GO" id="GO:0019433">
    <property type="term" value="P:triglyceride catabolic process"/>
    <property type="evidence" value="ECO:0000250"/>
    <property type="project" value="UniProtKB"/>
</dbReference>
<dbReference type="CDD" id="cd00707">
    <property type="entry name" value="Pancreat_lipase_like"/>
    <property type="match status" value="1"/>
</dbReference>
<dbReference type="CDD" id="cd01759">
    <property type="entry name" value="PLAT_PL"/>
    <property type="match status" value="1"/>
</dbReference>
<dbReference type="FunFam" id="3.40.50.1820:FF:000033">
    <property type="entry name" value="Pancreatic triacylglycerol lipase"/>
    <property type="match status" value="1"/>
</dbReference>
<dbReference type="FunFam" id="2.60.60.20:FF:000003">
    <property type="entry name" value="Triacylglycerol lipase"/>
    <property type="match status" value="1"/>
</dbReference>
<dbReference type="Gene3D" id="3.40.50.1820">
    <property type="entry name" value="alpha/beta hydrolase"/>
    <property type="match status" value="1"/>
</dbReference>
<dbReference type="Gene3D" id="2.60.60.20">
    <property type="entry name" value="PLAT/LH2 domain"/>
    <property type="match status" value="1"/>
</dbReference>
<dbReference type="InterPro" id="IPR029058">
    <property type="entry name" value="AB_hydrolase_fold"/>
</dbReference>
<dbReference type="InterPro" id="IPR013818">
    <property type="entry name" value="Lipase"/>
</dbReference>
<dbReference type="InterPro" id="IPR016272">
    <property type="entry name" value="Lipase_LIPH"/>
</dbReference>
<dbReference type="InterPro" id="IPR033906">
    <property type="entry name" value="Lipase_N"/>
</dbReference>
<dbReference type="InterPro" id="IPR002331">
    <property type="entry name" value="Lipase_panc"/>
</dbReference>
<dbReference type="InterPro" id="IPR001024">
    <property type="entry name" value="PLAT/LH2_dom"/>
</dbReference>
<dbReference type="InterPro" id="IPR036392">
    <property type="entry name" value="PLAT/LH2_dom_sf"/>
</dbReference>
<dbReference type="InterPro" id="IPR000734">
    <property type="entry name" value="TAG_lipase"/>
</dbReference>
<dbReference type="PANTHER" id="PTHR11610">
    <property type="entry name" value="LIPASE"/>
    <property type="match status" value="1"/>
</dbReference>
<dbReference type="PANTHER" id="PTHR11610:SF165">
    <property type="entry name" value="PANCREATIC LIPASE-RELATED PROTEIN 2"/>
    <property type="match status" value="1"/>
</dbReference>
<dbReference type="Pfam" id="PF00151">
    <property type="entry name" value="Lipase"/>
    <property type="match status" value="1"/>
</dbReference>
<dbReference type="Pfam" id="PF01477">
    <property type="entry name" value="PLAT"/>
    <property type="match status" value="1"/>
</dbReference>
<dbReference type="PIRSF" id="PIRSF000865">
    <property type="entry name" value="Lipoprotein_lipase_LIPH"/>
    <property type="match status" value="1"/>
</dbReference>
<dbReference type="PRINTS" id="PR00823">
    <property type="entry name" value="PANCLIPASE"/>
</dbReference>
<dbReference type="PRINTS" id="PR00821">
    <property type="entry name" value="TAGLIPASE"/>
</dbReference>
<dbReference type="SMART" id="SM00308">
    <property type="entry name" value="LH2"/>
    <property type="match status" value="1"/>
</dbReference>
<dbReference type="SUPFAM" id="SSF53474">
    <property type="entry name" value="alpha/beta-Hydrolases"/>
    <property type="match status" value="1"/>
</dbReference>
<dbReference type="SUPFAM" id="SSF49723">
    <property type="entry name" value="Lipase/lipooxygenase domain (PLAT/LH2 domain)"/>
    <property type="match status" value="1"/>
</dbReference>
<dbReference type="PROSITE" id="PS00120">
    <property type="entry name" value="LIPASE_SER"/>
    <property type="match status" value="1"/>
</dbReference>
<dbReference type="PROSITE" id="PS50095">
    <property type="entry name" value="PLAT"/>
    <property type="match status" value="1"/>
</dbReference>
<name>LIPR2_RAT</name>
<comment type="function">
    <text evidence="1 2 6 8 9">Lipase that primarily hydrolyzes triglycerides and galactosylglycerides (PubMed:8656075, PubMed:9822688). In neonates, may play a major role in pancreatic digestion of dietary fats such as milk fat globules enriched in long-chain triglycerides (By similarity). Hydrolyzes short-, medium- and long-chain fatty acyls in triglycerides without apparent positional specificity (PubMed:8656075). Can completely deacylate triacylglycerols (By similarity). When the liver matures and bile salt synthesis increases, likely functions mainly as a galactolipase and monoacylglycerol lipase (By similarity). Hydrolyzes monogalactosyldiglycerols (MGDG) and digalactosyldiacylglycerols (DGDG) present in a plant-based diet, releasing long-chain polyunsaturated fatty acids (By similarity). Hydrolyzes medium- and long-chain fatty acyls in galactolipids (PubMed:9822688). May act together with LIPF to hydrolyze partially digested triglycerides (By similarity). Hydrolyzes long-chain monoglycerides with high efficiency. In cytotoxic T cells, contributes to perforin-dependent cell lysis, but is unlikely to mediate direct cytotoxicity (By similarity). Also has low phospholipase activity (PubMed:8656075, PubMed:9822688). In neurons, required for the localization of the phospholipid 1-oleoyl-2-palmitoyl-PC (OPPC) to neurite tips through acyl chain remodeling of membrane phospholipids (PubMed:32963038). The resulting OPPC-rich lipid membrane domain recruits the t-SNARE protein STX4 by selectively interacting with the STX4 transmembrane domain and this promotes surface expression of the dopamine transporter SLC6A3/DAT at neurite tips by facilitating fusion of SLC6A3-containing transport vesicles with the plasma membrane (PubMed:32963038).</text>
</comment>
<comment type="catalytic activity">
    <reaction evidence="8 9">
        <text>a triacylglycerol + H2O = a diacylglycerol + a fatty acid + H(+)</text>
        <dbReference type="Rhea" id="RHEA:12044"/>
        <dbReference type="ChEBI" id="CHEBI:15377"/>
        <dbReference type="ChEBI" id="CHEBI:15378"/>
        <dbReference type="ChEBI" id="CHEBI:17855"/>
        <dbReference type="ChEBI" id="CHEBI:18035"/>
        <dbReference type="ChEBI" id="CHEBI:28868"/>
        <dbReference type="EC" id="3.1.1.3"/>
    </reaction>
    <physiologicalReaction direction="left-to-right" evidence="13 14">
        <dbReference type="Rhea" id="RHEA:12045"/>
    </physiologicalReaction>
</comment>
<comment type="catalytic activity">
    <reaction evidence="9">
        <text>a 1,2-diacyl-3-O-(beta-D-galactosyl)-sn-glycerol + 2 H2O = 3-beta-D-galactosyl-sn-glycerol + 2 a fatty acid + 2 H(+)</text>
        <dbReference type="Rhea" id="RHEA:13189"/>
        <dbReference type="ChEBI" id="CHEBI:15377"/>
        <dbReference type="ChEBI" id="CHEBI:15378"/>
        <dbReference type="ChEBI" id="CHEBI:15754"/>
        <dbReference type="ChEBI" id="CHEBI:17615"/>
        <dbReference type="ChEBI" id="CHEBI:28868"/>
        <dbReference type="EC" id="3.1.1.26"/>
    </reaction>
    <physiologicalReaction direction="left-to-right" evidence="14">
        <dbReference type="Rhea" id="RHEA:13190"/>
    </physiologicalReaction>
</comment>
<comment type="catalytic activity">
    <reaction evidence="8">
        <text>1,2,3-tri-(9Z-octadecenoyl)-glycerol + H2O = di-(9Z)-octadecenoylglycerol + (9Z)-octadecenoate + H(+)</text>
        <dbReference type="Rhea" id="RHEA:38575"/>
        <dbReference type="ChEBI" id="CHEBI:15377"/>
        <dbReference type="ChEBI" id="CHEBI:15378"/>
        <dbReference type="ChEBI" id="CHEBI:30823"/>
        <dbReference type="ChEBI" id="CHEBI:53753"/>
        <dbReference type="ChEBI" id="CHEBI:75945"/>
    </reaction>
    <physiologicalReaction direction="left-to-right" evidence="13">
        <dbReference type="Rhea" id="RHEA:38576"/>
    </physiologicalReaction>
</comment>
<comment type="catalytic activity">
    <reaction evidence="2">
        <text>di-(9Z)-octadecenoylglycerol + H2O = (9Z-octadecenoyl)-glycerol + (9Z)-octadecenoate + H(+)</text>
        <dbReference type="Rhea" id="RHEA:47868"/>
        <dbReference type="ChEBI" id="CHEBI:15377"/>
        <dbReference type="ChEBI" id="CHEBI:15378"/>
        <dbReference type="ChEBI" id="CHEBI:30823"/>
        <dbReference type="ChEBI" id="CHEBI:75937"/>
        <dbReference type="ChEBI" id="CHEBI:75945"/>
    </reaction>
    <physiologicalReaction direction="left-to-right" evidence="2">
        <dbReference type="Rhea" id="RHEA:47869"/>
    </physiologicalReaction>
</comment>
<comment type="catalytic activity">
    <reaction evidence="2">
        <text>(9Z-octadecenoyl)-glycerol + H2O = glycerol + (9Z)-octadecenoate + H(+)</text>
        <dbReference type="Rhea" id="RHEA:39955"/>
        <dbReference type="ChEBI" id="CHEBI:15377"/>
        <dbReference type="ChEBI" id="CHEBI:15378"/>
        <dbReference type="ChEBI" id="CHEBI:17754"/>
        <dbReference type="ChEBI" id="CHEBI:30823"/>
        <dbReference type="ChEBI" id="CHEBI:75937"/>
    </reaction>
    <physiologicalReaction direction="left-to-right" evidence="2">
        <dbReference type="Rhea" id="RHEA:39956"/>
    </physiologicalReaction>
</comment>
<comment type="catalytic activity">
    <reaction evidence="2">
        <text>1-(9Z-octadecenoyl)-glycerol + H2O = glycerol + (9Z)-octadecenoate + H(+)</text>
        <dbReference type="Rhea" id="RHEA:38487"/>
        <dbReference type="ChEBI" id="CHEBI:15377"/>
        <dbReference type="ChEBI" id="CHEBI:15378"/>
        <dbReference type="ChEBI" id="CHEBI:17754"/>
        <dbReference type="ChEBI" id="CHEBI:30823"/>
        <dbReference type="ChEBI" id="CHEBI:75342"/>
    </reaction>
    <physiologicalReaction direction="left-to-right" evidence="2">
        <dbReference type="Rhea" id="RHEA:38488"/>
    </physiologicalReaction>
</comment>
<comment type="catalytic activity">
    <reaction evidence="2">
        <text>1,2,3-tripropanoylglycerol + H2O = dipropanoylglycerol + propanoate + H(+)</text>
        <dbReference type="Rhea" id="RHEA:48024"/>
        <dbReference type="ChEBI" id="CHEBI:15377"/>
        <dbReference type="ChEBI" id="CHEBI:15378"/>
        <dbReference type="ChEBI" id="CHEBI:17272"/>
        <dbReference type="ChEBI" id="CHEBI:88153"/>
        <dbReference type="ChEBI" id="CHEBI:88155"/>
    </reaction>
    <physiologicalReaction direction="left-to-right" evidence="2">
        <dbReference type="Rhea" id="RHEA:48025"/>
    </physiologicalReaction>
</comment>
<comment type="catalytic activity">
    <reaction evidence="8">
        <text>1,2,3-tributanoylglycerol + H2O = dibutanoylglycerol + butanoate + H(+)</text>
        <dbReference type="Rhea" id="RHEA:40475"/>
        <dbReference type="ChEBI" id="CHEBI:15377"/>
        <dbReference type="ChEBI" id="CHEBI:15378"/>
        <dbReference type="ChEBI" id="CHEBI:17968"/>
        <dbReference type="ChEBI" id="CHEBI:35020"/>
        <dbReference type="ChEBI" id="CHEBI:76478"/>
    </reaction>
    <physiologicalReaction direction="left-to-right" evidence="13">
        <dbReference type="Rhea" id="RHEA:40476"/>
    </physiologicalReaction>
</comment>
<comment type="catalytic activity">
    <reaction evidence="8">
        <text>1,2,3-trioctanoylglycerol + H2O = dioctanoylglycerol + octanoate + H(+)</text>
        <dbReference type="Rhea" id="RHEA:47864"/>
        <dbReference type="ChEBI" id="CHEBI:15377"/>
        <dbReference type="ChEBI" id="CHEBI:15378"/>
        <dbReference type="ChEBI" id="CHEBI:25646"/>
        <dbReference type="ChEBI" id="CHEBI:76978"/>
        <dbReference type="ChEBI" id="CHEBI:88066"/>
    </reaction>
    <physiologicalReaction direction="left-to-right" evidence="13">
        <dbReference type="Rhea" id="RHEA:47865"/>
    </physiologicalReaction>
</comment>
<comment type="catalytic activity">
    <reaction evidence="9">
        <text>1,2-didecanoylglycerol + H2O = decanoylglycerol + decanoate + H(+)</text>
        <dbReference type="Rhea" id="RHEA:48596"/>
        <dbReference type="ChEBI" id="CHEBI:11152"/>
        <dbReference type="ChEBI" id="CHEBI:15377"/>
        <dbReference type="ChEBI" id="CHEBI:15378"/>
        <dbReference type="ChEBI" id="CHEBI:27689"/>
        <dbReference type="ChEBI" id="CHEBI:90605"/>
    </reaction>
    <physiologicalReaction direction="left-to-right" evidence="14">
        <dbReference type="Rhea" id="RHEA:48597"/>
    </physiologicalReaction>
</comment>
<comment type="catalytic activity">
    <reaction evidence="2">
        <text>long chain 1,2-diacyl-3-O-beta-D-galactosyl-sn-glycerol + H2O = long chain acyl-3-O-beta-D-galactosyl-sn-glycerol + a fatty acid + H(+)</text>
        <dbReference type="Rhea" id="RHEA:48700"/>
        <dbReference type="ChEBI" id="CHEBI:15377"/>
        <dbReference type="ChEBI" id="CHEBI:15378"/>
        <dbReference type="ChEBI" id="CHEBI:28868"/>
        <dbReference type="ChEBI" id="CHEBI:90477"/>
        <dbReference type="ChEBI" id="CHEBI:90770"/>
    </reaction>
    <physiologicalReaction direction="left-to-right" evidence="2">
        <dbReference type="Rhea" id="RHEA:48701"/>
    </physiologicalReaction>
</comment>
<comment type="catalytic activity">
    <reaction evidence="2">
        <text>1,2-dioctanoyl-3-O-beta-D-galactosyl-sn-glycerol + H2O = octanoyl-3-(beta-D-galactosyl)-sn-glycerol + octanoate + H(+)</text>
        <dbReference type="Rhea" id="RHEA:48696"/>
        <dbReference type="ChEBI" id="CHEBI:15377"/>
        <dbReference type="ChEBI" id="CHEBI:15378"/>
        <dbReference type="ChEBI" id="CHEBI:25646"/>
        <dbReference type="ChEBI" id="CHEBI:90453"/>
        <dbReference type="ChEBI" id="CHEBI:90769"/>
    </reaction>
    <physiologicalReaction direction="left-to-right" evidence="2">
        <dbReference type="Rhea" id="RHEA:48697"/>
    </physiologicalReaction>
</comment>
<comment type="catalytic activity">
    <reaction evidence="9">
        <text>1,2-didodecanoyl-3-beta-D-galactosyl-sn-glycerol + H2O = dodecanoyl-3-beta-D-galactosyl-sn-glycerol + dodecanoate + H(+)</text>
        <dbReference type="Rhea" id="RHEA:48540"/>
        <dbReference type="ChEBI" id="CHEBI:15377"/>
        <dbReference type="ChEBI" id="CHEBI:15378"/>
        <dbReference type="ChEBI" id="CHEBI:18262"/>
        <dbReference type="ChEBI" id="CHEBI:90340"/>
        <dbReference type="ChEBI" id="CHEBI:90515"/>
    </reaction>
    <physiologicalReaction direction="left-to-right" evidence="14">
        <dbReference type="Rhea" id="RHEA:48541"/>
    </physiologicalReaction>
</comment>
<comment type="catalytic activity">
    <reaction evidence="2">
        <text>1-beta-D-galactosyl-2,3-didodecanoyl-sn-glycerol + H2O = 1-beta-D-galactosyl-dodecanoyl-sn-glycerol + dodecanoate + H(+)</text>
        <dbReference type="Rhea" id="RHEA:48536"/>
        <dbReference type="ChEBI" id="CHEBI:15377"/>
        <dbReference type="ChEBI" id="CHEBI:15378"/>
        <dbReference type="ChEBI" id="CHEBI:18262"/>
        <dbReference type="ChEBI" id="CHEBI:90342"/>
        <dbReference type="ChEBI" id="CHEBI:90514"/>
    </reaction>
    <physiologicalReaction direction="left-to-right" evidence="2">
        <dbReference type="Rhea" id="RHEA:48537"/>
    </physiologicalReaction>
</comment>
<comment type="catalytic activity">
    <reaction evidence="2">
        <text>a 1,2-diacyl-3-O-[alpha-D-galactosyl-(1-&gt;6)-beta-D-galactosyl]-sn-glycerol + H2O = acyl-3-O-[alpha-D-galactosyl-(1-&gt;6)-beta-D-galactosyl]-sn-glycerol + a fatty acid + H(+)</text>
        <dbReference type="Rhea" id="RHEA:48372"/>
        <dbReference type="ChEBI" id="CHEBI:15377"/>
        <dbReference type="ChEBI" id="CHEBI:15378"/>
        <dbReference type="ChEBI" id="CHEBI:28396"/>
        <dbReference type="ChEBI" id="CHEBI:28868"/>
        <dbReference type="ChEBI" id="CHEBI:90310"/>
    </reaction>
    <physiologicalReaction direction="left-to-right" evidence="2">
        <dbReference type="Rhea" id="RHEA:48373"/>
    </physiologicalReaction>
</comment>
<comment type="catalytic activity">
    <reaction evidence="2">
        <text>long chain 1,2-diacyl-3-O-[alpha-D-galactosyl-(1-&gt;6)-beta-D-galactosyl]-sn-glycerol + H2O = long chain acyl-3-O-[alpha-D-galactosyl-(1-&gt;6)-beta-D-galactosyl]-sn-glycerol + a fatty acid + H(+)</text>
        <dbReference type="Rhea" id="RHEA:48708"/>
        <dbReference type="ChEBI" id="CHEBI:15377"/>
        <dbReference type="ChEBI" id="CHEBI:15378"/>
        <dbReference type="ChEBI" id="CHEBI:28868"/>
        <dbReference type="ChEBI" id="CHEBI:90463"/>
        <dbReference type="ChEBI" id="CHEBI:90774"/>
    </reaction>
    <physiologicalReaction direction="left-to-right" evidence="2">
        <dbReference type="Rhea" id="RHEA:48709"/>
    </physiologicalReaction>
</comment>
<comment type="catalytic activity">
    <reaction evidence="2">
        <text>1,2-dioctanoyl-3-O-[alpha-D-galactosyl-(1-&gt;6)-beta-D-galactosyl]-sn-glycerol + H2O = octanoyl-3-O-[alpha-D-galactosyl-(1-&gt;6)-beta-D-galactosyl]-sn-glycerol + octanoate + H(+)</text>
        <dbReference type="Rhea" id="RHEA:48692"/>
        <dbReference type="ChEBI" id="CHEBI:15377"/>
        <dbReference type="ChEBI" id="CHEBI:15378"/>
        <dbReference type="ChEBI" id="CHEBI:25646"/>
        <dbReference type="ChEBI" id="CHEBI:90457"/>
        <dbReference type="ChEBI" id="CHEBI:90768"/>
    </reaction>
    <physiologicalReaction direction="left-to-right" evidence="2">
        <dbReference type="Rhea" id="RHEA:48693"/>
    </physiologicalReaction>
</comment>
<comment type="catalytic activity">
    <reaction evidence="2">
        <text>1,2-didodecanoyl-3-O-[alpha-D-galactosyl-(1-&gt;6)-beta-D-galactosyl]-sn-glycerol + H2O = dodecanoyl-3-O-[alpha-D-galactosyl-(1-&gt;6)-beta-D-galactosyl]-sn-glycerol + dodecanoate + H(+)</text>
        <dbReference type="Rhea" id="RHEA:48516"/>
        <dbReference type="ChEBI" id="CHEBI:15377"/>
        <dbReference type="ChEBI" id="CHEBI:15378"/>
        <dbReference type="ChEBI" id="CHEBI:18262"/>
        <dbReference type="ChEBI" id="CHEBI:90337"/>
        <dbReference type="ChEBI" id="CHEBI:90359"/>
    </reaction>
    <physiologicalReaction direction="left-to-right" evidence="2">
        <dbReference type="Rhea" id="RHEA:48517"/>
    </physiologicalReaction>
</comment>
<comment type="catalytic activity">
    <reaction evidence="8">
        <text>a 1,2-diacyl-sn-glycero-3-phosphocholine + H2O = a monoacyl-sn-glycero-3-phosphocholine + a fatty acid + H(+)</text>
        <dbReference type="Rhea" id="RHEA:44664"/>
        <dbReference type="ChEBI" id="CHEBI:15377"/>
        <dbReference type="ChEBI" id="CHEBI:15378"/>
        <dbReference type="ChEBI" id="CHEBI:28868"/>
        <dbReference type="ChEBI" id="CHEBI:57643"/>
        <dbReference type="ChEBI" id="CHEBI:84465"/>
    </reaction>
    <physiologicalReaction direction="left-to-right" evidence="13">
        <dbReference type="Rhea" id="RHEA:44665"/>
    </physiologicalReaction>
</comment>
<comment type="activity regulation">
    <text evidence="8">CLPS stimulates triacylglycerol lipase activity. Triacylglycerol lipase activity is not inhibited by increasing bile salt concentration.</text>
</comment>
<comment type="biophysicochemical properties">
    <phDependence>
        <text evidence="8">Optimum pH is 7-8 (lipase activity in the presence of bile salts) and 7.0-7.25 (lipase activity in the absence of bile salts).</text>
    </phDependence>
</comment>
<comment type="pathway">
    <text evidence="2">Glycerolipid metabolism; triacylglycerol degradation.</text>
</comment>
<comment type="pathway">
    <text evidence="2">Glycolipid metabolism.</text>
</comment>
<comment type="subcellular location">
    <subcellularLocation>
        <location evidence="2">Secreted</location>
    </subcellularLocation>
    <subcellularLocation>
        <location evidence="7">Zymogen granule membrane</location>
        <topology evidence="12">Peripheral membrane protein</topology>
    </subcellularLocation>
    <subcellularLocation>
        <location evidence="6">Cell projection</location>
        <location evidence="6">Neuron projection</location>
    </subcellularLocation>
    <text evidence="6">Localizes to neurite tips in neuronal cells.</text>
</comment>
<comment type="tissue specificity">
    <text evidence="7">Expressed in pancreatic acinar cells (at protein level).</text>
</comment>
<comment type="induction">
    <text evidence="6">By NGF (at protein level).</text>
</comment>
<comment type="similarity">
    <text evidence="11">Belongs to the AB hydrolase superfamily. Lipase family.</text>
</comment>
<comment type="sequence caution" evidence="11">
    <conflict type="erroneous initiation">
        <sequence resource="EMBL-CDS" id="AAA41250"/>
    </conflict>
</comment>
<sequence length="468" mass="52535">MLLCWIVSLLLATVGGKEVCYGHLGCFSNDKPWAGMLQRPLKIFPWSPEDIDTRFLLYTNENPNNYQKISATEPDTIKFSNFQLDRKTRFIVHGFIDKGEDGWLLDMCKKMFQVEKVNCICVDWRRGSRTEYTQASYNTRVVGAEIAFLVQVLSTEMGYSPENVHLIGHSLGAHVVGEAGRRLEGHVGRITGLDPAEPCFQGLPEEVRLDPSDAMFVDVIHTDSAPIIPYLGFGMSQKVGHLDFFPNGGKEMPGCQKNILSTIVDINGIWEGTQNFVACNHLRSYKYYASSILNPDGFLGYPCSSYEKFQQNDCFPCPEEGCPKMGHYADQFEGKTATVEQTVYLNTGDSGNFTRWRYKVSVTLSGAKKLSGYILVALYGNNGNSKQYEIFKGSLKPEARHVRDIDVDINVGEIQKVKFLWNNKVINLFRPTLGASQITVQSGVDGKEYNFCSSDTVREDVLQSLYPC</sequence>
<reference key="1">
    <citation type="journal article" date="1993" name="J. Biol. Chem.">
        <title>Identification and cloning of GP-3 from rat pancreatic acinar zymogen granules as a glycosylated membrane-associated lipase.</title>
        <authorList>
            <person name="Wishart M.J."/>
            <person name="Andrews P.C."/>
            <person name="Nichols R."/>
            <person name="Blevins G.T. Jr."/>
            <person name="Logsdon C.D."/>
            <person name="Williams J.A."/>
        </authorList>
    </citation>
    <scope>NUCLEOTIDE SEQUENCE [MRNA]</scope>
    <scope>PROTEIN SEQUENCE OF 17-46</scope>
    <scope>TISSUE SPECIFICITY</scope>
    <scope>SUBCELLULAR LOCATION</scope>
    <source>
        <strain>Sprague-Dawley</strain>
        <tissue>Pancreas</tissue>
    </source>
</reference>
<reference key="2">
    <citation type="journal article" date="1994" name="Am. J. Physiol.">
        <title>Rat pancreatic lipase and two related proteins: enzymatic properties and mRNA expression during development.</title>
        <authorList>
            <person name="Payne R.M."/>
            <person name="Sims H.F."/>
            <person name="Jennens M.L."/>
            <person name="Lowe M.E."/>
        </authorList>
    </citation>
    <scope>NUCLEOTIDE SEQUENCE [MRNA]</scope>
</reference>
<reference key="3">
    <citation type="journal article" date="1995" name="J. Lipid Res.">
        <title>Rat GP-3 is a pancreatic lipase with kinetic properties that differ from colipase-dependent pancreatic lipase.</title>
        <authorList>
            <person name="Jennens M.L."/>
            <person name="Lowe M.E."/>
        </authorList>
    </citation>
    <scope>FUNCTION</scope>
    <scope>CATALYTIC ACTIVITY</scope>
    <scope>ACTIVITY REGULATION</scope>
    <scope>BIOPHYSICOCHEMICAL PROPERTIES</scope>
</reference>
<reference key="4">
    <citation type="journal article" date="2020" name="J. Lipid Res.">
        <title>PLRP2 selectively localizes synaptic membrane proteins via acyl-chain remodeling of phospholipids.</title>
        <authorList>
            <person name="Kuge H."/>
            <person name="Miyamoto I."/>
            <person name="Yagyu K.I."/>
            <person name="Honke K."/>
        </authorList>
    </citation>
    <scope>FUNCTION</scope>
    <scope>SUBCELLULAR LOCATION</scope>
    <scope>INDUCTION</scope>
    <scope>MUTAGENESIS OF SER-170 AND HIS-281</scope>
</reference>
<reference key="5">
    <citation type="journal article" date="1998" name="J. Biol. Chem.">
        <title>Structure and activity of rat pancreatic lipase-related protein 2.</title>
        <authorList>
            <person name="Roussel A."/>
            <person name="Yang Y."/>
            <person name="Ferrato F."/>
            <person name="Verger R."/>
            <person name="Cambillau C."/>
            <person name="Lowe M."/>
        </authorList>
    </citation>
    <scope>X-RAY CRYSTALLOGRAPHY (1.8 ANGSTROMS) OF 17-468</scope>
    <scope>DISULFIDE BONDS</scope>
    <scope>GLYCOSYLATION AT ASN-352</scope>
    <scope>CATALYTIC ACTIVITY</scope>
    <scope>ACTIVE SITE</scope>
    <scope>FUNCTION</scope>
    <source>
        <tissue>Pancreas</tissue>
    </source>
</reference>
<gene>
    <name evidence="15" type="primary">Pnliprp2</name>
    <name evidence="2" type="synonym">Plrp2</name>
</gene>
<feature type="signal peptide" evidence="7">
    <location>
        <begin position="1"/>
        <end position="16"/>
    </location>
</feature>
<feature type="chain" id="PRO_0000017796" description="Pancreatic lipase-related protein 2">
    <location>
        <begin position="17"/>
        <end position="468"/>
    </location>
</feature>
<feature type="domain" description="PLAT" evidence="4">
    <location>
        <begin position="356"/>
        <end position="468"/>
    </location>
</feature>
<feature type="region of interest" description="Required for galactolipase activity" evidence="2">
    <location>
        <begin position="92"/>
        <end position="104"/>
    </location>
</feature>
<feature type="region of interest" description="Required for galactolipase activity" evidence="2">
    <location>
        <begin position="256"/>
        <end position="278"/>
    </location>
</feature>
<feature type="active site" description="Nucleophile" evidence="9">
    <location>
        <position position="170"/>
    </location>
</feature>
<feature type="active site" description="Charge relay system" evidence="5 9">
    <location>
        <position position="194"/>
    </location>
</feature>
<feature type="active site" description="Charge relay system" evidence="5 9">
    <location>
        <position position="281"/>
    </location>
</feature>
<feature type="binding site" evidence="2">
    <location>
        <position position="205"/>
    </location>
    <ligand>
        <name>Ca(2+)</name>
        <dbReference type="ChEBI" id="CHEBI:29108"/>
    </ligand>
</feature>
<feature type="binding site" evidence="2">
    <location>
        <position position="208"/>
    </location>
    <ligand>
        <name>Ca(2+)</name>
        <dbReference type="ChEBI" id="CHEBI:29108"/>
    </ligand>
</feature>
<feature type="binding site" evidence="2">
    <location>
        <position position="210"/>
    </location>
    <ligand>
        <name>Ca(2+)</name>
        <dbReference type="ChEBI" id="CHEBI:29108"/>
    </ligand>
</feature>
<feature type="binding site" evidence="2">
    <location>
        <position position="213"/>
    </location>
    <ligand>
        <name>Ca(2+)</name>
        <dbReference type="ChEBI" id="CHEBI:29108"/>
    </ligand>
</feature>
<feature type="glycosylation site" description="N-linked (GlcNAc...) asparagine" evidence="9">
    <location>
        <position position="352"/>
    </location>
</feature>
<feature type="glycosylation site" description="N-linked (GlcNAc...) asparagine" evidence="3">
    <location>
        <position position="427"/>
    </location>
</feature>
<feature type="disulfide bond" evidence="4 9">
    <location>
        <begin position="20"/>
        <end position="26"/>
    </location>
</feature>
<feature type="disulfide bond" evidence="4 9">
    <location>
        <begin position="108"/>
        <end position="119"/>
    </location>
</feature>
<feature type="disulfide bond" evidence="4 9">
    <location>
        <begin position="255"/>
        <end position="279"/>
    </location>
</feature>
<feature type="disulfide bond" evidence="4 9">
    <location>
        <begin position="303"/>
        <end position="314"/>
    </location>
</feature>
<feature type="disulfide bond" evidence="4 9">
    <location>
        <begin position="317"/>
        <end position="322"/>
    </location>
</feature>
<feature type="disulfide bond" evidence="4 9">
    <location>
        <begin position="452"/>
        <end position="468"/>
    </location>
</feature>
<feature type="mutagenesis site" description="Abolishes rescue of lipase-deficient activity in Pnliprp2 knockout neurons." evidence="6">
    <original>S</original>
    <variation>G</variation>
    <location>
        <position position="170"/>
    </location>
</feature>
<feature type="mutagenesis site" description="Abolishes rescue of lipase-deficient activity in Pnliprp2 knockout neurons." evidence="6">
    <original>H</original>
    <variation>L</variation>
    <location>
        <position position="281"/>
    </location>
</feature>
<feature type="strand" evidence="16">
    <location>
        <begin position="18"/>
        <end position="20"/>
    </location>
</feature>
<feature type="helix" evidence="16">
    <location>
        <begin position="22"/>
        <end position="24"/>
    </location>
</feature>
<feature type="strand" evidence="16">
    <location>
        <begin position="26"/>
        <end position="28"/>
    </location>
</feature>
<feature type="strand" evidence="16">
    <location>
        <begin position="33"/>
        <end position="36"/>
    </location>
</feature>
<feature type="helix" evidence="16">
    <location>
        <begin position="48"/>
        <end position="51"/>
    </location>
</feature>
<feature type="strand" evidence="16">
    <location>
        <begin position="54"/>
        <end position="59"/>
    </location>
</feature>
<feature type="strand" evidence="16">
    <location>
        <begin position="62"/>
        <end position="69"/>
    </location>
</feature>
<feature type="strand" evidence="16">
    <location>
        <begin position="71"/>
        <end position="73"/>
    </location>
</feature>
<feature type="helix" evidence="16">
    <location>
        <begin position="75"/>
        <end position="78"/>
    </location>
</feature>
<feature type="strand" evidence="16">
    <location>
        <begin position="86"/>
        <end position="92"/>
    </location>
</feature>
<feature type="helix" evidence="16">
    <location>
        <begin position="103"/>
        <end position="112"/>
    </location>
</feature>
<feature type="strand" evidence="16">
    <location>
        <begin position="117"/>
        <end position="123"/>
    </location>
</feature>
<feature type="helix" evidence="16">
    <location>
        <begin position="125"/>
        <end position="128"/>
    </location>
</feature>
<feature type="helix" evidence="16">
    <location>
        <begin position="132"/>
        <end position="157"/>
    </location>
</feature>
<feature type="helix" evidence="16">
    <location>
        <begin position="161"/>
        <end position="163"/>
    </location>
</feature>
<feature type="strand" evidence="16">
    <location>
        <begin position="164"/>
        <end position="169"/>
    </location>
</feature>
<feature type="helix" evidence="16">
    <location>
        <begin position="172"/>
        <end position="182"/>
    </location>
</feature>
<feature type="turn" evidence="16">
    <location>
        <begin position="183"/>
        <end position="185"/>
    </location>
</feature>
<feature type="strand" evidence="16">
    <location>
        <begin position="187"/>
        <end position="194"/>
    </location>
</feature>
<feature type="turn" evidence="16">
    <location>
        <begin position="198"/>
        <end position="202"/>
    </location>
</feature>
<feature type="helix" evidence="16">
    <location>
        <begin position="205"/>
        <end position="207"/>
    </location>
</feature>
<feature type="helix" evidence="16">
    <location>
        <begin position="211"/>
        <end position="213"/>
    </location>
</feature>
<feature type="strand" evidence="16">
    <location>
        <begin position="214"/>
        <end position="220"/>
    </location>
</feature>
<feature type="helix" evidence="16">
    <location>
        <begin position="227"/>
        <end position="230"/>
    </location>
</feature>
<feature type="strand" evidence="16">
    <location>
        <begin position="240"/>
        <end position="246"/>
    </location>
</feature>
<feature type="helix" evidence="16">
    <location>
        <begin position="266"/>
        <end position="270"/>
    </location>
</feature>
<feature type="helix" evidence="16">
    <location>
        <begin position="279"/>
        <end position="293"/>
    </location>
</feature>
<feature type="helix" evidence="16">
    <location>
        <begin position="295"/>
        <end position="297"/>
    </location>
</feature>
<feature type="helix" evidence="16">
    <location>
        <begin position="306"/>
        <end position="310"/>
    </location>
</feature>
<feature type="strand" evidence="16">
    <location>
        <begin position="324"/>
        <end position="326"/>
    </location>
</feature>
<feature type="helix" evidence="16">
    <location>
        <begin position="327"/>
        <end position="331"/>
    </location>
</feature>
<feature type="turn" evidence="16">
    <location>
        <begin position="333"/>
        <end position="336"/>
    </location>
</feature>
<feature type="strand" evidence="16">
    <location>
        <begin position="337"/>
        <end position="345"/>
    </location>
</feature>
<feature type="strand" evidence="16">
    <location>
        <begin position="356"/>
        <end position="365"/>
    </location>
</feature>
<feature type="strand" evidence="16">
    <location>
        <begin position="370"/>
        <end position="380"/>
    </location>
</feature>
<feature type="strand" evidence="16">
    <location>
        <begin position="388"/>
        <end position="395"/>
    </location>
</feature>
<feature type="strand" evidence="16">
    <location>
        <begin position="400"/>
        <end position="409"/>
    </location>
</feature>
<feature type="strand" evidence="16">
    <location>
        <begin position="413"/>
        <end position="422"/>
    </location>
</feature>
<feature type="strand" evidence="16">
    <location>
        <begin position="433"/>
        <end position="442"/>
    </location>
</feature>
<feature type="turn" evidence="16">
    <location>
        <begin position="443"/>
        <end position="445"/>
    </location>
</feature>
<feature type="strand" evidence="16">
    <location>
        <begin position="448"/>
        <end position="452"/>
    </location>
</feature>
<feature type="strand" evidence="16">
    <location>
        <begin position="463"/>
        <end position="467"/>
    </location>
</feature>
<organism>
    <name type="scientific">Rattus norvegicus</name>
    <name type="common">Rat</name>
    <dbReference type="NCBI Taxonomy" id="10116"/>
    <lineage>
        <taxon>Eukaryota</taxon>
        <taxon>Metazoa</taxon>
        <taxon>Chordata</taxon>
        <taxon>Craniata</taxon>
        <taxon>Vertebrata</taxon>
        <taxon>Euteleostomi</taxon>
        <taxon>Mammalia</taxon>
        <taxon>Eutheria</taxon>
        <taxon>Euarchontoglires</taxon>
        <taxon>Glires</taxon>
        <taxon>Rodentia</taxon>
        <taxon>Myomorpha</taxon>
        <taxon>Muroidea</taxon>
        <taxon>Muridae</taxon>
        <taxon>Murinae</taxon>
        <taxon>Rattus</taxon>
    </lineage>
</organism>
<proteinExistence type="evidence at protein level"/>
<accession>P54318</accession>
<keyword id="KW-0002">3D-structure</keyword>
<keyword id="KW-0106">Calcium</keyword>
<keyword id="KW-0966">Cell projection</keyword>
<keyword id="KW-0968">Cytoplasmic vesicle</keyword>
<keyword id="KW-0903">Direct protein sequencing</keyword>
<keyword id="KW-1015">Disulfide bond</keyword>
<keyword id="KW-0325">Glycoprotein</keyword>
<keyword id="KW-0378">Hydrolase</keyword>
<keyword id="KW-0442">Lipid degradation</keyword>
<keyword id="KW-0443">Lipid metabolism</keyword>
<keyword id="KW-0472">Membrane</keyword>
<keyword id="KW-0479">Metal-binding</keyword>
<keyword id="KW-1185">Reference proteome</keyword>
<keyword id="KW-0964">Secreted</keyword>
<keyword id="KW-0732">Signal</keyword>
<protein>
    <recommendedName>
        <fullName evidence="2">Pancreatic lipase-related protein 2</fullName>
        <shortName evidence="2">PL-RP2</shortName>
    </recommendedName>
    <alternativeName>
        <fullName evidence="1">Cytotoxic T lymphocyte lipase</fullName>
    </alternativeName>
    <alternativeName>
        <fullName>Galactolipase</fullName>
        <ecNumber evidence="9">3.1.1.26</ecNumber>
    </alternativeName>
    <alternativeName>
        <fullName evidence="10">Secretory glycoprotein GP-3</fullName>
    </alternativeName>
    <alternativeName>
        <fullName>Triacylglycerol lipase</fullName>
        <ecNumber evidence="8 9">3.1.1.3</ecNumber>
    </alternativeName>
</protein>
<evidence type="ECO:0000250" key="1">
    <source>
        <dbReference type="UniProtKB" id="P17892"/>
    </source>
</evidence>
<evidence type="ECO:0000250" key="2">
    <source>
        <dbReference type="UniProtKB" id="P54317"/>
    </source>
</evidence>
<evidence type="ECO:0000255" key="3"/>
<evidence type="ECO:0000255" key="4">
    <source>
        <dbReference type="PROSITE-ProRule" id="PRU00152"/>
    </source>
</evidence>
<evidence type="ECO:0000255" key="5">
    <source>
        <dbReference type="PROSITE-ProRule" id="PRU10037"/>
    </source>
</evidence>
<evidence type="ECO:0000269" key="6">
    <source>
    </source>
</evidence>
<evidence type="ECO:0000269" key="7">
    <source>
    </source>
</evidence>
<evidence type="ECO:0000269" key="8">
    <source>
    </source>
</evidence>
<evidence type="ECO:0000269" key="9">
    <source>
    </source>
</evidence>
<evidence type="ECO:0000303" key="10">
    <source>
    </source>
</evidence>
<evidence type="ECO:0000305" key="11"/>
<evidence type="ECO:0000305" key="12">
    <source>
    </source>
</evidence>
<evidence type="ECO:0000305" key="13">
    <source>
    </source>
</evidence>
<evidence type="ECO:0000305" key="14">
    <source>
    </source>
</evidence>
<evidence type="ECO:0000312" key="15">
    <source>
        <dbReference type="RGD" id="620793"/>
    </source>
</evidence>
<evidence type="ECO:0007829" key="16">
    <source>
        <dbReference type="PDB" id="1BU8"/>
    </source>
</evidence>